<feature type="chain" id="PRO_0000042771" description="Ubiquitin-like protein NEDD8">
    <location>
        <begin position="1"/>
        <end position="76"/>
    </location>
</feature>
<feature type="propeptide" id="PRO_0000042772" evidence="2">
    <location>
        <begin position="77"/>
        <end position="81"/>
    </location>
</feature>
<feature type="region of interest" description="Interaction with UBE1C" evidence="2">
    <location>
        <begin position="70"/>
        <end position="72"/>
    </location>
</feature>
<feature type="site" description="Interaction with UBE1C" evidence="2">
    <location>
        <position position="8"/>
    </location>
</feature>
<feature type="site" description="Interaction with UBE1C" evidence="2">
    <location>
        <position position="44"/>
    </location>
</feature>
<feature type="modified residue" description="N6-acetyllysine" evidence="1">
    <location>
        <position position="48"/>
    </location>
</feature>
<feature type="cross-link" description="Glycyl lysine isopeptide (Gly-Lys) (interchain with K-? in acceptor proteins)" evidence="4">
    <location>
        <position position="76"/>
    </location>
</feature>
<reference key="1">
    <citation type="submission" date="2005-05" db="EMBL/GenBank/DDBJ databases">
        <title>Neural precursor cell expressed, developmentally down-regulated gene 8 (nedd8) in retina with circadian rhythm.</title>
        <authorList>
            <person name="Li Y."/>
            <person name="Li Y."/>
            <person name="Wang Z."/>
            <person name="Mai G."/>
        </authorList>
    </citation>
    <scope>NUCLEOTIDE SEQUENCE [MRNA]</scope>
    <source>
        <tissue>Retina</tissue>
    </source>
</reference>
<evidence type="ECO:0000250" key="1">
    <source>
        <dbReference type="UniProtKB" id="P29595"/>
    </source>
</evidence>
<evidence type="ECO:0000250" key="2">
    <source>
        <dbReference type="UniProtKB" id="Q15843"/>
    </source>
</evidence>
<evidence type="ECO:0000250" key="3">
    <source>
        <dbReference type="UniProtKB" id="Q71UE8"/>
    </source>
</evidence>
<evidence type="ECO:0000255" key="4">
    <source>
        <dbReference type="PROSITE-ProRule" id="PRU00214"/>
    </source>
</evidence>
<evidence type="ECO:0000305" key="5"/>
<keyword id="KW-0007">Acetylation</keyword>
<keyword id="KW-1017">Isopeptide bond</keyword>
<keyword id="KW-0539">Nucleus</keyword>
<keyword id="KW-1185">Reference proteome</keyword>
<keyword id="KW-0833">Ubl conjugation pathway</keyword>
<name>NEDD8_RABIT</name>
<dbReference type="EMBL" id="DQ067448">
    <property type="protein sequence ID" value="AAY67833.1"/>
    <property type="molecule type" value="mRNA"/>
</dbReference>
<dbReference type="RefSeq" id="NP_001075681.1">
    <property type="nucleotide sequence ID" value="NM_001082212.1"/>
</dbReference>
<dbReference type="BMRB" id="Q4PLJ0"/>
<dbReference type="SMR" id="Q4PLJ0"/>
<dbReference type="FunCoup" id="Q4PLJ0">
    <property type="interactions" value="3015"/>
</dbReference>
<dbReference type="STRING" id="9986.ENSOCUP00000002526"/>
<dbReference type="PaxDb" id="9986-ENSOCUP00000002526"/>
<dbReference type="Ensembl" id="ENSOCUT00000002907.3">
    <property type="protein sequence ID" value="ENSOCUP00000002526.2"/>
    <property type="gene ID" value="ENSOCUG00000002910.3"/>
</dbReference>
<dbReference type="GeneID" id="100009008"/>
<dbReference type="KEGG" id="ocu:100009008"/>
<dbReference type="CTD" id="4738"/>
<dbReference type="eggNOG" id="KOG0005">
    <property type="taxonomic scope" value="Eukaryota"/>
</dbReference>
<dbReference type="GeneTree" id="ENSGT00940000155856"/>
<dbReference type="HOGENOM" id="CLU_010412_6_4_1"/>
<dbReference type="InParanoid" id="Q4PLJ0"/>
<dbReference type="OMA" id="YAGKQMA"/>
<dbReference type="OrthoDB" id="428577at2759"/>
<dbReference type="TreeFam" id="TF300072"/>
<dbReference type="Proteomes" id="UP000001811">
    <property type="component" value="Chromosome 17"/>
</dbReference>
<dbReference type="Bgee" id="ENSOCUG00000002910">
    <property type="expression patterns" value="Expressed in blood and 19 other cell types or tissues"/>
</dbReference>
<dbReference type="GO" id="GO:0005829">
    <property type="term" value="C:cytosol"/>
    <property type="evidence" value="ECO:0007669"/>
    <property type="project" value="Ensembl"/>
</dbReference>
<dbReference type="GO" id="GO:0098978">
    <property type="term" value="C:glutamatergic synapse"/>
    <property type="evidence" value="ECO:0007669"/>
    <property type="project" value="Ensembl"/>
</dbReference>
<dbReference type="GO" id="GO:0005654">
    <property type="term" value="C:nucleoplasm"/>
    <property type="evidence" value="ECO:0007669"/>
    <property type="project" value="Ensembl"/>
</dbReference>
<dbReference type="GO" id="GO:0031625">
    <property type="term" value="F:ubiquitin protein ligase binding"/>
    <property type="evidence" value="ECO:0007669"/>
    <property type="project" value="Ensembl"/>
</dbReference>
<dbReference type="GO" id="GO:0008104">
    <property type="term" value="P:protein localization"/>
    <property type="evidence" value="ECO:0007669"/>
    <property type="project" value="Ensembl"/>
</dbReference>
<dbReference type="GO" id="GO:0045116">
    <property type="term" value="P:protein neddylation"/>
    <property type="evidence" value="ECO:0007669"/>
    <property type="project" value="Ensembl"/>
</dbReference>
<dbReference type="GO" id="GO:0150052">
    <property type="term" value="P:regulation of postsynapse assembly"/>
    <property type="evidence" value="ECO:0007669"/>
    <property type="project" value="Ensembl"/>
</dbReference>
<dbReference type="GO" id="GO:0006357">
    <property type="term" value="P:regulation of transcription by RNA polymerase II"/>
    <property type="evidence" value="ECO:0007669"/>
    <property type="project" value="Ensembl"/>
</dbReference>
<dbReference type="CDD" id="cd01806">
    <property type="entry name" value="Ubl_NEDD8"/>
    <property type="match status" value="1"/>
</dbReference>
<dbReference type="FunFam" id="3.10.20.90:FF:000023">
    <property type="entry name" value="NEDD8 protein"/>
    <property type="match status" value="1"/>
</dbReference>
<dbReference type="Gene3D" id="3.10.20.90">
    <property type="entry name" value="Phosphatidylinositol 3-kinase Catalytic Subunit, Chain A, domain 1"/>
    <property type="match status" value="1"/>
</dbReference>
<dbReference type="InterPro" id="IPR038738">
    <property type="entry name" value="Nedd8-like"/>
</dbReference>
<dbReference type="InterPro" id="IPR000626">
    <property type="entry name" value="Ubiquitin-like_dom"/>
</dbReference>
<dbReference type="InterPro" id="IPR029071">
    <property type="entry name" value="Ubiquitin-like_domsf"/>
</dbReference>
<dbReference type="InterPro" id="IPR019954">
    <property type="entry name" value="Ubiquitin_CS"/>
</dbReference>
<dbReference type="InterPro" id="IPR019956">
    <property type="entry name" value="Ubiquitin_dom"/>
</dbReference>
<dbReference type="InterPro" id="IPR050158">
    <property type="entry name" value="Ubiquitin_ubiquitin-like"/>
</dbReference>
<dbReference type="PANTHER" id="PTHR10666">
    <property type="entry name" value="UBIQUITIN"/>
    <property type="match status" value="1"/>
</dbReference>
<dbReference type="Pfam" id="PF00240">
    <property type="entry name" value="ubiquitin"/>
    <property type="match status" value="1"/>
</dbReference>
<dbReference type="PRINTS" id="PR00348">
    <property type="entry name" value="UBIQUITIN"/>
</dbReference>
<dbReference type="SMART" id="SM00213">
    <property type="entry name" value="UBQ"/>
    <property type="match status" value="1"/>
</dbReference>
<dbReference type="SUPFAM" id="SSF54236">
    <property type="entry name" value="Ubiquitin-like"/>
    <property type="match status" value="1"/>
</dbReference>
<dbReference type="PROSITE" id="PS00299">
    <property type="entry name" value="UBIQUITIN_1"/>
    <property type="match status" value="1"/>
</dbReference>
<dbReference type="PROSITE" id="PS50053">
    <property type="entry name" value="UBIQUITIN_2"/>
    <property type="match status" value="1"/>
</dbReference>
<organism>
    <name type="scientific">Oryctolagus cuniculus</name>
    <name type="common">Rabbit</name>
    <dbReference type="NCBI Taxonomy" id="9986"/>
    <lineage>
        <taxon>Eukaryota</taxon>
        <taxon>Metazoa</taxon>
        <taxon>Chordata</taxon>
        <taxon>Craniata</taxon>
        <taxon>Vertebrata</taxon>
        <taxon>Euteleostomi</taxon>
        <taxon>Mammalia</taxon>
        <taxon>Eutheria</taxon>
        <taxon>Euarchontoglires</taxon>
        <taxon>Glires</taxon>
        <taxon>Lagomorpha</taxon>
        <taxon>Leporidae</taxon>
        <taxon>Oryctolagus</taxon>
    </lineage>
</organism>
<comment type="function">
    <text evidence="2">Ubiquitin-like protein which plays an important role in cell cycle control and embryogenesis via its conjugation to a limited number of cellular proteins, such as cullins or p53/TP53. Attachment of NEDD8 to cullins is critical for the recruitment of E2 to the cullin-RING-based E3 ubiquitin-protein ligase complex, thus facilitating polyubiquitination and proteasomal degradation of cyclins and other regulatory proteins. Attachment of NEDD8 to p53/TP53 inhibits p53/TP53 transcriptional activity. Covalent attachment to its substrates requires prior activation by the E1 complex UBE1C-APPBP1 and linkage to the E2 enzyme UBE2M.</text>
</comment>
<comment type="subunit">
    <text evidence="2 3">Interacts with AHR; interaction is direct (By similarity). Interacts with NUB1; interaction is direct (By similarity). Interacts with ESR1 (By similarity).</text>
</comment>
<comment type="subcellular location">
    <subcellularLocation>
        <location evidence="2">Nucleus</location>
    </subcellularLocation>
    <text evidence="2">Mainly nuclear.</text>
</comment>
<comment type="PTM">
    <text evidence="2">Cleavage of precursor form by UCHL3 or SENP8 is necessary for function.</text>
</comment>
<comment type="similarity">
    <text evidence="5">Belongs to the ubiquitin family.</text>
</comment>
<accession>Q4PLJ0</accession>
<protein>
    <recommendedName>
        <fullName>Ubiquitin-like protein NEDD8</fullName>
    </recommendedName>
    <alternativeName>
        <fullName>Neddylin</fullName>
    </alternativeName>
</protein>
<gene>
    <name type="primary">NEDD8</name>
</gene>
<sequence length="81" mass="9072">MLIKVKTLTGKEIEIDIEPTDKVERIKERVEEKEGIPPQQQRLIYSGKQMNDEKTAADYKILGGSVLHLVLALRGGGGLRQ</sequence>
<proteinExistence type="inferred from homology"/>